<dbReference type="EC" id="4.2.3.5" evidence="1"/>
<dbReference type="EMBL" id="CP001252">
    <property type="protein sequence ID" value="ACK46112.1"/>
    <property type="molecule type" value="Genomic_DNA"/>
</dbReference>
<dbReference type="RefSeq" id="WP_012587325.1">
    <property type="nucleotide sequence ID" value="NC_011663.1"/>
</dbReference>
<dbReference type="SMR" id="B8EEA7"/>
<dbReference type="KEGG" id="sbp:Sbal223_1607"/>
<dbReference type="HOGENOM" id="CLU_034547_0_2_6"/>
<dbReference type="UniPathway" id="UPA00053">
    <property type="reaction ID" value="UER00090"/>
</dbReference>
<dbReference type="Proteomes" id="UP000002507">
    <property type="component" value="Chromosome"/>
</dbReference>
<dbReference type="GO" id="GO:0005829">
    <property type="term" value="C:cytosol"/>
    <property type="evidence" value="ECO:0007669"/>
    <property type="project" value="TreeGrafter"/>
</dbReference>
<dbReference type="GO" id="GO:0004107">
    <property type="term" value="F:chorismate synthase activity"/>
    <property type="evidence" value="ECO:0007669"/>
    <property type="project" value="UniProtKB-UniRule"/>
</dbReference>
<dbReference type="GO" id="GO:0010181">
    <property type="term" value="F:FMN binding"/>
    <property type="evidence" value="ECO:0007669"/>
    <property type="project" value="TreeGrafter"/>
</dbReference>
<dbReference type="GO" id="GO:0008652">
    <property type="term" value="P:amino acid biosynthetic process"/>
    <property type="evidence" value="ECO:0007669"/>
    <property type="project" value="UniProtKB-KW"/>
</dbReference>
<dbReference type="GO" id="GO:0009073">
    <property type="term" value="P:aromatic amino acid family biosynthetic process"/>
    <property type="evidence" value="ECO:0007669"/>
    <property type="project" value="UniProtKB-KW"/>
</dbReference>
<dbReference type="GO" id="GO:0009423">
    <property type="term" value="P:chorismate biosynthetic process"/>
    <property type="evidence" value="ECO:0007669"/>
    <property type="project" value="UniProtKB-UniRule"/>
</dbReference>
<dbReference type="CDD" id="cd07304">
    <property type="entry name" value="Chorismate_synthase"/>
    <property type="match status" value="1"/>
</dbReference>
<dbReference type="FunFam" id="3.60.150.10:FF:000001">
    <property type="entry name" value="Chorismate synthase"/>
    <property type="match status" value="1"/>
</dbReference>
<dbReference type="Gene3D" id="3.60.150.10">
    <property type="entry name" value="Chorismate synthase AroC"/>
    <property type="match status" value="1"/>
</dbReference>
<dbReference type="HAMAP" id="MF_00300">
    <property type="entry name" value="Chorismate_synth"/>
    <property type="match status" value="1"/>
</dbReference>
<dbReference type="InterPro" id="IPR000453">
    <property type="entry name" value="Chorismate_synth"/>
</dbReference>
<dbReference type="InterPro" id="IPR035904">
    <property type="entry name" value="Chorismate_synth_AroC_sf"/>
</dbReference>
<dbReference type="InterPro" id="IPR020541">
    <property type="entry name" value="Chorismate_synthase_CS"/>
</dbReference>
<dbReference type="NCBIfam" id="TIGR00033">
    <property type="entry name" value="aroC"/>
    <property type="match status" value="1"/>
</dbReference>
<dbReference type="NCBIfam" id="NF003793">
    <property type="entry name" value="PRK05382.1"/>
    <property type="match status" value="1"/>
</dbReference>
<dbReference type="PANTHER" id="PTHR21085">
    <property type="entry name" value="CHORISMATE SYNTHASE"/>
    <property type="match status" value="1"/>
</dbReference>
<dbReference type="PANTHER" id="PTHR21085:SF0">
    <property type="entry name" value="CHORISMATE SYNTHASE"/>
    <property type="match status" value="1"/>
</dbReference>
<dbReference type="Pfam" id="PF01264">
    <property type="entry name" value="Chorismate_synt"/>
    <property type="match status" value="1"/>
</dbReference>
<dbReference type="PIRSF" id="PIRSF001456">
    <property type="entry name" value="Chorismate_synth"/>
    <property type="match status" value="1"/>
</dbReference>
<dbReference type="SUPFAM" id="SSF103263">
    <property type="entry name" value="Chorismate synthase, AroC"/>
    <property type="match status" value="1"/>
</dbReference>
<dbReference type="PROSITE" id="PS00787">
    <property type="entry name" value="CHORISMATE_SYNTHASE_1"/>
    <property type="match status" value="1"/>
</dbReference>
<dbReference type="PROSITE" id="PS00788">
    <property type="entry name" value="CHORISMATE_SYNTHASE_2"/>
    <property type="match status" value="1"/>
</dbReference>
<dbReference type="PROSITE" id="PS00789">
    <property type="entry name" value="CHORISMATE_SYNTHASE_3"/>
    <property type="match status" value="1"/>
</dbReference>
<sequence>MSGNSIGQNFVVTTFGESHGVALGCIIDGCPPGLELTEADMQHDLDRRRPGTSRYTTARREPDEVRILSGVFEGKTTGTSIGLLIENTDQRSQDYSNIKDLFRPGHADYTYQQKYGMRDYRGGGRSSARETAMRVAAGAVAKKYLKQVHGIEIYGFMSQLGPICAETIDLDQIEQNAFFFPDASKLEALDEYMRELKKSGDSIGAKISVIATGVPVGLGEPVFDRLDADIAHALMGINAVKGVEIGDGFGVVTQKGSEGRDLMSPQGFESNHAGGVLGGISSGQPIIAHIALKPTSSISVPGQSMTAQGEMAEVVTKGRHDPCVGIRAVPIAEAMLAIVLMDHLLRHRAQNQDVRSHTPVLGMR</sequence>
<proteinExistence type="inferred from homology"/>
<gene>
    <name evidence="1" type="primary">aroC</name>
    <name type="ordered locus">Sbal223_1607</name>
</gene>
<reference key="1">
    <citation type="submission" date="2008-12" db="EMBL/GenBank/DDBJ databases">
        <title>Complete sequence of chromosome of Shewanella baltica OS223.</title>
        <authorList>
            <consortium name="US DOE Joint Genome Institute"/>
            <person name="Lucas S."/>
            <person name="Copeland A."/>
            <person name="Lapidus A."/>
            <person name="Glavina del Rio T."/>
            <person name="Dalin E."/>
            <person name="Tice H."/>
            <person name="Bruce D."/>
            <person name="Goodwin L."/>
            <person name="Pitluck S."/>
            <person name="Chertkov O."/>
            <person name="Meincke L."/>
            <person name="Brettin T."/>
            <person name="Detter J.C."/>
            <person name="Han C."/>
            <person name="Kuske C.R."/>
            <person name="Larimer F."/>
            <person name="Land M."/>
            <person name="Hauser L."/>
            <person name="Kyrpides N."/>
            <person name="Ovchinnikova G."/>
            <person name="Brettar I."/>
            <person name="Rodrigues J."/>
            <person name="Konstantinidis K."/>
            <person name="Tiedje J."/>
        </authorList>
    </citation>
    <scope>NUCLEOTIDE SEQUENCE [LARGE SCALE GENOMIC DNA]</scope>
    <source>
        <strain>OS223</strain>
    </source>
</reference>
<accession>B8EEA7</accession>
<comment type="function">
    <text evidence="1">Catalyzes the anti-1,4-elimination of the C-3 phosphate and the C-6 proR hydrogen from 5-enolpyruvylshikimate-3-phosphate (EPSP) to yield chorismate, which is the branch point compound that serves as the starting substrate for the three terminal pathways of aromatic amino acid biosynthesis. This reaction introduces a second double bond into the aromatic ring system.</text>
</comment>
<comment type="catalytic activity">
    <reaction evidence="1">
        <text>5-O-(1-carboxyvinyl)-3-phosphoshikimate = chorismate + phosphate</text>
        <dbReference type="Rhea" id="RHEA:21020"/>
        <dbReference type="ChEBI" id="CHEBI:29748"/>
        <dbReference type="ChEBI" id="CHEBI:43474"/>
        <dbReference type="ChEBI" id="CHEBI:57701"/>
        <dbReference type="EC" id="4.2.3.5"/>
    </reaction>
</comment>
<comment type="cofactor">
    <cofactor evidence="1">
        <name>FMNH2</name>
        <dbReference type="ChEBI" id="CHEBI:57618"/>
    </cofactor>
    <text evidence="1">Reduced FMN (FMNH(2)).</text>
</comment>
<comment type="pathway">
    <text evidence="1">Metabolic intermediate biosynthesis; chorismate biosynthesis; chorismate from D-erythrose 4-phosphate and phosphoenolpyruvate: step 7/7.</text>
</comment>
<comment type="subunit">
    <text evidence="1">Homotetramer.</text>
</comment>
<comment type="similarity">
    <text evidence="1">Belongs to the chorismate synthase family.</text>
</comment>
<name>AROC_SHEB2</name>
<feature type="chain" id="PRO_1000132786" description="Chorismate synthase">
    <location>
        <begin position="1"/>
        <end position="364"/>
    </location>
</feature>
<feature type="region of interest" description="Disordered" evidence="2">
    <location>
        <begin position="41"/>
        <end position="60"/>
    </location>
</feature>
<feature type="binding site" evidence="1">
    <location>
        <position position="48"/>
    </location>
    <ligand>
        <name>NADP(+)</name>
        <dbReference type="ChEBI" id="CHEBI:58349"/>
    </ligand>
</feature>
<feature type="binding site" evidence="1">
    <location>
        <position position="54"/>
    </location>
    <ligand>
        <name>NADP(+)</name>
        <dbReference type="ChEBI" id="CHEBI:58349"/>
    </ligand>
</feature>
<feature type="binding site" evidence="1">
    <location>
        <begin position="125"/>
        <end position="127"/>
    </location>
    <ligand>
        <name>FMN</name>
        <dbReference type="ChEBI" id="CHEBI:58210"/>
    </ligand>
</feature>
<feature type="binding site" evidence="1">
    <location>
        <begin position="238"/>
        <end position="239"/>
    </location>
    <ligand>
        <name>FMN</name>
        <dbReference type="ChEBI" id="CHEBI:58210"/>
    </ligand>
</feature>
<feature type="binding site" evidence="1">
    <location>
        <position position="278"/>
    </location>
    <ligand>
        <name>FMN</name>
        <dbReference type="ChEBI" id="CHEBI:58210"/>
    </ligand>
</feature>
<feature type="binding site" evidence="1">
    <location>
        <begin position="293"/>
        <end position="297"/>
    </location>
    <ligand>
        <name>FMN</name>
        <dbReference type="ChEBI" id="CHEBI:58210"/>
    </ligand>
</feature>
<feature type="binding site" evidence="1">
    <location>
        <position position="319"/>
    </location>
    <ligand>
        <name>FMN</name>
        <dbReference type="ChEBI" id="CHEBI:58210"/>
    </ligand>
</feature>
<organism>
    <name type="scientific">Shewanella baltica (strain OS223)</name>
    <dbReference type="NCBI Taxonomy" id="407976"/>
    <lineage>
        <taxon>Bacteria</taxon>
        <taxon>Pseudomonadati</taxon>
        <taxon>Pseudomonadota</taxon>
        <taxon>Gammaproteobacteria</taxon>
        <taxon>Alteromonadales</taxon>
        <taxon>Shewanellaceae</taxon>
        <taxon>Shewanella</taxon>
    </lineage>
</organism>
<evidence type="ECO:0000255" key="1">
    <source>
        <dbReference type="HAMAP-Rule" id="MF_00300"/>
    </source>
</evidence>
<evidence type="ECO:0000256" key="2">
    <source>
        <dbReference type="SAM" id="MobiDB-lite"/>
    </source>
</evidence>
<keyword id="KW-0028">Amino-acid biosynthesis</keyword>
<keyword id="KW-0057">Aromatic amino acid biosynthesis</keyword>
<keyword id="KW-0274">FAD</keyword>
<keyword id="KW-0285">Flavoprotein</keyword>
<keyword id="KW-0288">FMN</keyword>
<keyword id="KW-0456">Lyase</keyword>
<keyword id="KW-0521">NADP</keyword>
<protein>
    <recommendedName>
        <fullName evidence="1">Chorismate synthase</fullName>
        <shortName evidence="1">CS</shortName>
        <ecNumber evidence="1">4.2.3.5</ecNumber>
    </recommendedName>
    <alternativeName>
        <fullName evidence="1">5-enolpyruvylshikimate-3-phosphate phospholyase</fullName>
    </alternativeName>
</protein>